<protein>
    <recommendedName>
        <fullName evidence="1">Methylthioribulose-1-phosphate dehydratase</fullName>
        <shortName evidence="1">MTRu-1-P dehydratase</shortName>
        <ecNumber evidence="1">4.2.1.109</ecNumber>
    </recommendedName>
    <alternativeName>
        <fullName evidence="1">APAF1-interacting protein homolog</fullName>
    </alternativeName>
</protein>
<proteinExistence type="evidence at transcript level"/>
<name>MTNB_XENLA</name>
<dbReference type="EC" id="4.2.1.109" evidence="1"/>
<dbReference type="EMBL" id="BC068773">
    <property type="protein sequence ID" value="AAH68773.1"/>
    <property type="molecule type" value="mRNA"/>
</dbReference>
<dbReference type="RefSeq" id="NP_001084676.1">
    <property type="nucleotide sequence ID" value="NM_001091207.1"/>
</dbReference>
<dbReference type="SMR" id="Q6NU29"/>
<dbReference type="DNASU" id="414636"/>
<dbReference type="GeneID" id="414636"/>
<dbReference type="KEGG" id="xla:414636"/>
<dbReference type="AGR" id="Xenbase:XB-GENE-6252291"/>
<dbReference type="CTD" id="414636"/>
<dbReference type="Xenbase" id="XB-GENE-6252291">
    <property type="gene designation" value="apip.S"/>
</dbReference>
<dbReference type="OMA" id="SKCSDCA"/>
<dbReference type="OrthoDB" id="191080at2759"/>
<dbReference type="UniPathway" id="UPA00904">
    <property type="reaction ID" value="UER00875"/>
</dbReference>
<dbReference type="Proteomes" id="UP000186698">
    <property type="component" value="Chromosome 4S"/>
</dbReference>
<dbReference type="Bgee" id="414636">
    <property type="expression patterns" value="Expressed in blastula and 19 other cell types or tissues"/>
</dbReference>
<dbReference type="GO" id="GO:0005737">
    <property type="term" value="C:cytoplasm"/>
    <property type="evidence" value="ECO:0000318"/>
    <property type="project" value="GO_Central"/>
</dbReference>
<dbReference type="GO" id="GO:0046570">
    <property type="term" value="F:methylthioribulose 1-phosphate dehydratase activity"/>
    <property type="evidence" value="ECO:0000250"/>
    <property type="project" value="UniProtKB"/>
</dbReference>
<dbReference type="GO" id="GO:0008270">
    <property type="term" value="F:zinc ion binding"/>
    <property type="evidence" value="ECO:0000250"/>
    <property type="project" value="UniProtKB"/>
</dbReference>
<dbReference type="GO" id="GO:0006915">
    <property type="term" value="P:apoptotic process"/>
    <property type="evidence" value="ECO:0007669"/>
    <property type="project" value="UniProtKB-KW"/>
</dbReference>
<dbReference type="GO" id="GO:0019509">
    <property type="term" value="P:L-methionine salvage from methylthioadenosine"/>
    <property type="evidence" value="ECO:0000250"/>
    <property type="project" value="UniProtKB"/>
</dbReference>
<dbReference type="FunFam" id="3.40.225.10:FF:000003">
    <property type="entry name" value="Methylthioribulose-1-phosphate dehydratase"/>
    <property type="match status" value="1"/>
</dbReference>
<dbReference type="Gene3D" id="3.40.225.10">
    <property type="entry name" value="Class II aldolase/adducin N-terminal domain"/>
    <property type="match status" value="1"/>
</dbReference>
<dbReference type="HAMAP" id="MF_03116">
    <property type="entry name" value="Salvage_MtnB_euk"/>
    <property type="match status" value="1"/>
</dbReference>
<dbReference type="InterPro" id="IPR001303">
    <property type="entry name" value="Aldolase_II/adducin_N"/>
</dbReference>
<dbReference type="InterPro" id="IPR036409">
    <property type="entry name" value="Aldolase_II/adducin_N_sf"/>
</dbReference>
<dbReference type="InterPro" id="IPR017714">
    <property type="entry name" value="MethylthioRu-1-P_deHdtase_MtnB"/>
</dbReference>
<dbReference type="InterPro" id="IPR027514">
    <property type="entry name" value="Salvage_MtnB_euk"/>
</dbReference>
<dbReference type="NCBIfam" id="TIGR03328">
    <property type="entry name" value="salvage_mtnB"/>
    <property type="match status" value="1"/>
</dbReference>
<dbReference type="PANTHER" id="PTHR10640">
    <property type="entry name" value="METHYLTHIORIBULOSE-1-PHOSPHATE DEHYDRATASE"/>
    <property type="match status" value="1"/>
</dbReference>
<dbReference type="PANTHER" id="PTHR10640:SF7">
    <property type="entry name" value="METHYLTHIORIBULOSE-1-PHOSPHATE DEHYDRATASE"/>
    <property type="match status" value="1"/>
</dbReference>
<dbReference type="Pfam" id="PF00596">
    <property type="entry name" value="Aldolase_II"/>
    <property type="match status" value="1"/>
</dbReference>
<dbReference type="SMART" id="SM01007">
    <property type="entry name" value="Aldolase_II"/>
    <property type="match status" value="1"/>
</dbReference>
<dbReference type="SUPFAM" id="SSF53639">
    <property type="entry name" value="AraD/HMP-PK domain-like"/>
    <property type="match status" value="1"/>
</dbReference>
<accession>Q6NU29</accession>
<feature type="chain" id="PRO_0000239026" description="Methylthioribulose-1-phosphate dehydratase">
    <location>
        <begin position="1"/>
        <end position="239"/>
    </location>
</feature>
<feature type="active site" description="Proton donor/acceptor" evidence="1">
    <location>
        <position position="136"/>
    </location>
</feature>
<feature type="binding site" evidence="1">
    <location>
        <position position="94"/>
    </location>
    <ligand>
        <name>substrate</name>
    </ligand>
</feature>
<feature type="binding site" evidence="1">
    <location>
        <position position="112"/>
    </location>
    <ligand>
        <name>Zn(2+)</name>
        <dbReference type="ChEBI" id="CHEBI:29105"/>
    </ligand>
</feature>
<feature type="binding site" evidence="1">
    <location>
        <position position="114"/>
    </location>
    <ligand>
        <name>Zn(2+)</name>
        <dbReference type="ChEBI" id="CHEBI:29105"/>
    </ligand>
</feature>
<feature type="binding site" evidence="1">
    <location>
        <position position="192"/>
    </location>
    <ligand>
        <name>Zn(2+)</name>
        <dbReference type="ChEBI" id="CHEBI:29105"/>
    </ligand>
</feature>
<organism>
    <name type="scientific">Xenopus laevis</name>
    <name type="common">African clawed frog</name>
    <dbReference type="NCBI Taxonomy" id="8355"/>
    <lineage>
        <taxon>Eukaryota</taxon>
        <taxon>Metazoa</taxon>
        <taxon>Chordata</taxon>
        <taxon>Craniata</taxon>
        <taxon>Vertebrata</taxon>
        <taxon>Euteleostomi</taxon>
        <taxon>Amphibia</taxon>
        <taxon>Batrachia</taxon>
        <taxon>Anura</taxon>
        <taxon>Pipoidea</taxon>
        <taxon>Pipidae</taxon>
        <taxon>Xenopodinae</taxon>
        <taxon>Xenopus</taxon>
        <taxon>Xenopus</taxon>
    </lineage>
</organism>
<keyword id="KW-0028">Amino-acid biosynthesis</keyword>
<keyword id="KW-0053">Apoptosis</keyword>
<keyword id="KW-0963">Cytoplasm</keyword>
<keyword id="KW-0456">Lyase</keyword>
<keyword id="KW-0479">Metal-binding</keyword>
<keyword id="KW-0486">Methionine biosynthesis</keyword>
<keyword id="KW-1185">Reference proteome</keyword>
<keyword id="KW-0862">Zinc</keyword>
<comment type="function">
    <text evidence="1">Catalyzes the dehydration of methylthioribulose-1-phosphate (MTRu-1-P) into 2,3-diketo-5-methylthiopentyl-1-phosphate (DK-MTP-1-P). Functions in the methionine salvage pathway. May play a role in apoptosis.</text>
</comment>
<comment type="catalytic activity">
    <reaction evidence="1">
        <text>5-(methylsulfanyl)-D-ribulose 1-phosphate = 5-methylsulfanyl-2,3-dioxopentyl phosphate + H2O</text>
        <dbReference type="Rhea" id="RHEA:15549"/>
        <dbReference type="ChEBI" id="CHEBI:15377"/>
        <dbReference type="ChEBI" id="CHEBI:58548"/>
        <dbReference type="ChEBI" id="CHEBI:58828"/>
        <dbReference type="EC" id="4.2.1.109"/>
    </reaction>
</comment>
<comment type="cofactor">
    <cofactor evidence="1">
        <name>Zn(2+)</name>
        <dbReference type="ChEBI" id="CHEBI:29105"/>
    </cofactor>
    <text evidence="1">Binds 1 zinc ion per subunit.</text>
</comment>
<comment type="pathway">
    <text evidence="1">Amino-acid biosynthesis; L-methionine biosynthesis via salvage pathway; L-methionine from S-methyl-5-thio-alpha-D-ribose 1-phosphate: step 2/6.</text>
</comment>
<comment type="subcellular location">
    <subcellularLocation>
        <location evidence="1">Cytoplasm</location>
    </subcellularLocation>
</comment>
<comment type="similarity">
    <text evidence="1">Belongs to the aldolase class II family. MtnB subfamily.</text>
</comment>
<reference key="1">
    <citation type="submission" date="2004-04" db="EMBL/GenBank/DDBJ databases">
        <authorList>
            <consortium name="NIH - Xenopus Gene Collection (XGC) project"/>
        </authorList>
    </citation>
    <scope>NUCLEOTIDE SEQUENCE [LARGE SCALE MRNA]</scope>
    <source>
        <tissue>Embryo</tissue>
    </source>
</reference>
<sequence length="239" mass="27172">MYYCNRDNCNQTDNAKDKAHPRNLIPELCRQFYNLGWVTGTGGGISLKYGDEIYIAPSGVQKERIQPDDLFVCDIDEKDISCPPPYRNLKKSQCTPLFMNAYTMRDAGAVIHTHSKAAVMATLMFPGKEFLITHQEMIKGIKKGTSGGYYRYNDMLAVPIVENTPEEKDLKERMARAMTEYPDTCAVLVRRHGVYVWGDTWEKAKTMCECYDYLFDIAVQMKQHGLDPSAVPTEEKGIV</sequence>
<gene>
    <name evidence="1" type="primary">apip</name>
</gene>
<evidence type="ECO:0000255" key="1">
    <source>
        <dbReference type="HAMAP-Rule" id="MF_03116"/>
    </source>
</evidence>